<reference key="1">
    <citation type="submission" date="2007-06" db="EMBL/GenBank/DDBJ databases">
        <title>Complete sequence of Methanococcus maripaludis C7.</title>
        <authorList>
            <consortium name="US DOE Joint Genome Institute"/>
            <person name="Copeland A."/>
            <person name="Lucas S."/>
            <person name="Lapidus A."/>
            <person name="Barry K."/>
            <person name="Glavina del Rio T."/>
            <person name="Dalin E."/>
            <person name="Tice H."/>
            <person name="Pitluck S."/>
            <person name="Clum A."/>
            <person name="Schmutz J."/>
            <person name="Larimer F."/>
            <person name="Land M."/>
            <person name="Hauser L."/>
            <person name="Kyrpides N."/>
            <person name="Anderson I."/>
            <person name="Sieprawska-Lupa M."/>
            <person name="Whitman W.B."/>
            <person name="Richardson P."/>
        </authorList>
    </citation>
    <scope>NUCLEOTIDE SEQUENCE [LARGE SCALE GENOMIC DNA]</scope>
    <source>
        <strain>C7 / ATCC BAA-1331</strain>
    </source>
</reference>
<keyword id="KW-0687">Ribonucleoprotein</keyword>
<keyword id="KW-0689">Ribosomal protein</keyword>
<evidence type="ECO:0000255" key="1">
    <source>
        <dbReference type="HAMAP-Rule" id="MF_00292"/>
    </source>
</evidence>
<evidence type="ECO:0000305" key="2"/>
<comment type="similarity">
    <text evidence="1">Belongs to the eukaryotic ribosomal protein eS28 family.</text>
</comment>
<protein>
    <recommendedName>
        <fullName evidence="1">Small ribosomal subunit protein eS28</fullName>
    </recommendedName>
    <alternativeName>
        <fullName evidence="2">30S ribosomal protein S28e</fullName>
    </alternativeName>
</protein>
<accession>A6VJU6</accession>
<sequence>MADDMVYQEAVAAEVIQINGRTGVTGEIFQVRCKILGGKDTGRILTRNVKGPVKLGDFIMLRETEREAKQLGKRRK</sequence>
<name>RS28_METM7</name>
<dbReference type="EMBL" id="CP000745">
    <property type="protein sequence ID" value="ABR66722.1"/>
    <property type="molecule type" value="Genomic_DNA"/>
</dbReference>
<dbReference type="SMR" id="A6VJU6"/>
<dbReference type="STRING" id="426368.MmarC7_1664"/>
<dbReference type="KEGG" id="mmz:MmarC7_1664"/>
<dbReference type="eggNOG" id="arCOG04314">
    <property type="taxonomic scope" value="Archaea"/>
</dbReference>
<dbReference type="HOGENOM" id="CLU_178987_2_1_2"/>
<dbReference type="OrthoDB" id="7620at2157"/>
<dbReference type="GO" id="GO:0022627">
    <property type="term" value="C:cytosolic small ribosomal subunit"/>
    <property type="evidence" value="ECO:0007669"/>
    <property type="project" value="TreeGrafter"/>
</dbReference>
<dbReference type="GO" id="GO:0003735">
    <property type="term" value="F:structural constituent of ribosome"/>
    <property type="evidence" value="ECO:0007669"/>
    <property type="project" value="InterPro"/>
</dbReference>
<dbReference type="GO" id="GO:0030490">
    <property type="term" value="P:maturation of SSU-rRNA"/>
    <property type="evidence" value="ECO:0007669"/>
    <property type="project" value="TreeGrafter"/>
</dbReference>
<dbReference type="GO" id="GO:0000028">
    <property type="term" value="P:ribosomal small subunit assembly"/>
    <property type="evidence" value="ECO:0007669"/>
    <property type="project" value="TreeGrafter"/>
</dbReference>
<dbReference type="GO" id="GO:0006412">
    <property type="term" value="P:translation"/>
    <property type="evidence" value="ECO:0007669"/>
    <property type="project" value="UniProtKB-UniRule"/>
</dbReference>
<dbReference type="CDD" id="cd04457">
    <property type="entry name" value="S1_S28E"/>
    <property type="match status" value="1"/>
</dbReference>
<dbReference type="FunFam" id="2.40.50.140:FF:000145">
    <property type="entry name" value="30S ribosomal protein S28e"/>
    <property type="match status" value="1"/>
</dbReference>
<dbReference type="Gene3D" id="2.40.50.140">
    <property type="entry name" value="Nucleic acid-binding proteins"/>
    <property type="match status" value="1"/>
</dbReference>
<dbReference type="HAMAP" id="MF_00292">
    <property type="entry name" value="Ribosomal_eS28"/>
    <property type="match status" value="1"/>
</dbReference>
<dbReference type="InterPro" id="IPR012340">
    <property type="entry name" value="NA-bd_OB-fold"/>
</dbReference>
<dbReference type="InterPro" id="IPR000289">
    <property type="entry name" value="Ribosomal_eS28"/>
</dbReference>
<dbReference type="InterPro" id="IPR028626">
    <property type="entry name" value="Ribosomal_eS28_CS"/>
</dbReference>
<dbReference type="NCBIfam" id="NF003080">
    <property type="entry name" value="PRK04007.1"/>
    <property type="match status" value="1"/>
</dbReference>
<dbReference type="PANTHER" id="PTHR10769">
    <property type="entry name" value="40S RIBOSOMAL PROTEIN S28"/>
    <property type="match status" value="1"/>
</dbReference>
<dbReference type="PANTHER" id="PTHR10769:SF3">
    <property type="entry name" value="SMALL RIBOSOMAL SUBUNIT PROTEIN ES28"/>
    <property type="match status" value="1"/>
</dbReference>
<dbReference type="Pfam" id="PF01200">
    <property type="entry name" value="Ribosomal_S28e"/>
    <property type="match status" value="1"/>
</dbReference>
<dbReference type="SUPFAM" id="SSF50249">
    <property type="entry name" value="Nucleic acid-binding proteins"/>
    <property type="match status" value="1"/>
</dbReference>
<dbReference type="PROSITE" id="PS00961">
    <property type="entry name" value="RIBOSOMAL_S28E"/>
    <property type="match status" value="1"/>
</dbReference>
<feature type="chain" id="PRO_1000004122" description="Small ribosomal subunit protein eS28">
    <location>
        <begin position="1"/>
        <end position="76"/>
    </location>
</feature>
<organism>
    <name type="scientific">Methanococcus maripaludis (strain C7 / ATCC BAA-1331)</name>
    <dbReference type="NCBI Taxonomy" id="426368"/>
    <lineage>
        <taxon>Archaea</taxon>
        <taxon>Methanobacteriati</taxon>
        <taxon>Methanobacteriota</taxon>
        <taxon>Methanomada group</taxon>
        <taxon>Methanococci</taxon>
        <taxon>Methanococcales</taxon>
        <taxon>Methanococcaceae</taxon>
        <taxon>Methanococcus</taxon>
    </lineage>
</organism>
<proteinExistence type="inferred from homology"/>
<gene>
    <name evidence="1" type="primary">rps28e</name>
    <name type="ordered locus">MmarC7_1664</name>
</gene>